<feature type="signal peptide" evidence="2">
    <location>
        <begin position="1"/>
        <end position="18"/>
    </location>
</feature>
<feature type="chain" id="PRO_0000042717" description="Ribonuclease T2-like">
    <location>
        <begin position="19"/>
        <end position="434"/>
    </location>
</feature>
<feature type="active site" evidence="1">
    <location>
        <position position="87"/>
    </location>
</feature>
<feature type="active site" evidence="1">
    <location>
        <position position="156"/>
    </location>
</feature>
<feature type="active site" evidence="1">
    <location>
        <position position="160"/>
    </location>
</feature>
<feature type="glycosylation site" description="N-linked (GlcNAc...) asparagine" evidence="2">
    <location>
        <position position="37"/>
    </location>
</feature>
<feature type="glycosylation site" description="N-linked (GlcNAc...) asparagine" evidence="2">
    <location>
        <position position="70"/>
    </location>
</feature>
<feature type="glycosylation site" description="N-linked (GlcNAc...) asparagine" evidence="2">
    <location>
        <position position="103"/>
    </location>
</feature>
<feature type="glycosylation site" description="N-linked (GlcNAc...) asparagine" evidence="2">
    <location>
        <position position="123"/>
    </location>
</feature>
<feature type="disulfide bond" evidence="1">
    <location>
        <begin position="27"/>
        <end position="46"/>
    </location>
</feature>
<feature type="disulfide bond" evidence="1">
    <location>
        <begin position="35"/>
        <end position="94"/>
    </location>
</feature>
<feature type="disulfide bond" evidence="1">
    <location>
        <begin position="45"/>
        <end position="171"/>
    </location>
</feature>
<feature type="disulfide bond" evidence="1">
    <location>
        <begin position="102"/>
        <end position="163"/>
    </location>
</feature>
<feature type="disulfide bond" evidence="1">
    <location>
        <begin position="241"/>
        <end position="277"/>
    </location>
</feature>
<feature type="mutagenesis site" description="Impairs cytosolic tRNA-cleaving activity; when associated with F-160." evidence="7">
    <original>H</original>
    <variation>F</variation>
    <location>
        <position position="87"/>
    </location>
</feature>
<feature type="mutagenesis site" description="Impairs cytosolic tRNA-cleaving activity; when associated with F-87." evidence="7">
    <original>H</original>
    <variation>F</variation>
    <location>
        <position position="160"/>
    </location>
</feature>
<sequence length="434" mass="50171">MLLKNLHSLLQLPIFSNGADKGIEPNCPINIPLSCSNKTDIDNSCCFEYPGGIFLQTQFWNYFPSKNDLNETELVKELGPLDSFTIHGLWPDNCHGGYQQFCNRSLQIDDVYYLLHDKKFNNNDTSLQISGEKLLEYLDLYWKSNNGNHESLWIHEFNKHGTCISTIRPECYTEWGANSVDRKRAVYDYFRITYNLFKKLDTFSTLEKNNIVPSVDNSYSLEQIEAALSKEFEGKKVFIGCDRHNSLNEVWYYNHLKGSLLSEMFVPMDSLAIRTNCKKDGIKFFPKGYVPTFRRRPNKGARYRGVVRLSNINNGDQMQGFLIKNGHWMSQGTPANYELIKSPYGNYYLRTNQGFCDIISSSSNELVCKFRNIKDAGQFDFDPTKGGDGYIGYSGNYNWGGDTYPRRRNQSPIFSVDDEQNSKKYKFKLKFIKN</sequence>
<accession>Q02933</accession>
<accession>D6W3P4</accession>
<proteinExistence type="evidence at protein level"/>
<dbReference type="EC" id="4.6.1.19"/>
<dbReference type="EMBL" id="U43503">
    <property type="protein sequence ID" value="AAB68239.1"/>
    <property type="molecule type" value="Genomic_DNA"/>
</dbReference>
<dbReference type="EMBL" id="AY692990">
    <property type="protein sequence ID" value="AAT93009.1"/>
    <property type="molecule type" value="Genomic_DNA"/>
</dbReference>
<dbReference type="EMBL" id="BK006949">
    <property type="protein sequence ID" value="DAA11310.1"/>
    <property type="molecule type" value="Genomic_DNA"/>
</dbReference>
<dbReference type="PIR" id="S61999">
    <property type="entry name" value="S61999"/>
</dbReference>
<dbReference type="RefSeq" id="NP_015202.1">
    <property type="nucleotide sequence ID" value="NM_001183937.1"/>
</dbReference>
<dbReference type="SMR" id="Q02933"/>
<dbReference type="BioGRID" id="36058">
    <property type="interactions" value="134"/>
</dbReference>
<dbReference type="FunCoup" id="Q02933">
    <property type="interactions" value="204"/>
</dbReference>
<dbReference type="IntAct" id="Q02933">
    <property type="interactions" value="4"/>
</dbReference>
<dbReference type="STRING" id="4932.YPL123C"/>
<dbReference type="GlyCosmos" id="Q02933">
    <property type="glycosylation" value="4 sites, No reported glycans"/>
</dbReference>
<dbReference type="GlyGen" id="Q02933">
    <property type="glycosylation" value="4 sites"/>
</dbReference>
<dbReference type="PaxDb" id="4932-YPL123C"/>
<dbReference type="PeptideAtlas" id="Q02933"/>
<dbReference type="EnsemblFungi" id="YPL123C_mRNA">
    <property type="protein sequence ID" value="YPL123C"/>
    <property type="gene ID" value="YPL123C"/>
</dbReference>
<dbReference type="GeneID" id="855980"/>
<dbReference type="KEGG" id="sce:YPL123C"/>
<dbReference type="AGR" id="SGD:S000006044"/>
<dbReference type="SGD" id="S000006044">
    <property type="gene designation" value="RNY1"/>
</dbReference>
<dbReference type="VEuPathDB" id="FungiDB:YPL123C"/>
<dbReference type="eggNOG" id="KOG1642">
    <property type="taxonomic scope" value="Eukaryota"/>
</dbReference>
<dbReference type="GeneTree" id="ENSGT00640000091563"/>
<dbReference type="HOGENOM" id="CLU_037966_0_1_1"/>
<dbReference type="InParanoid" id="Q02933"/>
<dbReference type="OMA" id="HESLWIH"/>
<dbReference type="OrthoDB" id="435754at2759"/>
<dbReference type="BioCyc" id="YEAST:G3O-34022-MONOMER"/>
<dbReference type="Reactome" id="R-SCE-6798695">
    <property type="pathway name" value="Neutrophil degranulation"/>
</dbReference>
<dbReference type="BioGRID-ORCS" id="855980">
    <property type="hits" value="0 hits in 10 CRISPR screens"/>
</dbReference>
<dbReference type="PRO" id="PR:Q02933"/>
<dbReference type="Proteomes" id="UP000002311">
    <property type="component" value="Chromosome XVI"/>
</dbReference>
<dbReference type="RNAct" id="Q02933">
    <property type="molecule type" value="protein"/>
</dbReference>
<dbReference type="GO" id="GO:0005829">
    <property type="term" value="C:cytosol"/>
    <property type="evidence" value="ECO:0000314"/>
    <property type="project" value="SGD"/>
</dbReference>
<dbReference type="GO" id="GO:0005576">
    <property type="term" value="C:extracellular region"/>
    <property type="evidence" value="ECO:0000314"/>
    <property type="project" value="SGD"/>
</dbReference>
<dbReference type="GO" id="GO:0000324">
    <property type="term" value="C:fungal-type vacuole"/>
    <property type="evidence" value="ECO:0000314"/>
    <property type="project" value="SGD"/>
</dbReference>
<dbReference type="GO" id="GO:0005775">
    <property type="term" value="C:vacuolar lumen"/>
    <property type="evidence" value="ECO:0007669"/>
    <property type="project" value="UniProtKB-SubCell"/>
</dbReference>
<dbReference type="GO" id="GO:0005773">
    <property type="term" value="C:vacuole"/>
    <property type="evidence" value="ECO:0000314"/>
    <property type="project" value="SGD"/>
</dbReference>
<dbReference type="GO" id="GO:0033897">
    <property type="term" value="F:ribonuclease T2 activity"/>
    <property type="evidence" value="ECO:0007669"/>
    <property type="project" value="UniProtKB-EC"/>
</dbReference>
<dbReference type="GO" id="GO:0003723">
    <property type="term" value="F:RNA binding"/>
    <property type="evidence" value="ECO:0007669"/>
    <property type="project" value="InterPro"/>
</dbReference>
<dbReference type="GO" id="GO:0004521">
    <property type="term" value="F:RNA endonuclease activity"/>
    <property type="evidence" value="ECO:0000314"/>
    <property type="project" value="SGD"/>
</dbReference>
<dbReference type="GO" id="GO:0006915">
    <property type="term" value="P:apoptotic process"/>
    <property type="evidence" value="ECO:0000316"/>
    <property type="project" value="SGD"/>
</dbReference>
<dbReference type="GO" id="GO:0000902">
    <property type="term" value="P:cell morphogenesis"/>
    <property type="evidence" value="ECO:0000315"/>
    <property type="project" value="SGD"/>
</dbReference>
<dbReference type="GO" id="GO:0006402">
    <property type="term" value="P:mRNA catabolic process"/>
    <property type="evidence" value="ECO:0000315"/>
    <property type="project" value="SGD"/>
</dbReference>
<dbReference type="GO" id="GO:0006401">
    <property type="term" value="P:RNA catabolic process"/>
    <property type="evidence" value="ECO:0000315"/>
    <property type="project" value="SGD"/>
</dbReference>
<dbReference type="CDD" id="cd01061">
    <property type="entry name" value="RNase_T2_euk"/>
    <property type="match status" value="1"/>
</dbReference>
<dbReference type="FunFam" id="3.90.730.10:FF:000004">
    <property type="entry name" value="Ribonuclease T2-like"/>
    <property type="match status" value="1"/>
</dbReference>
<dbReference type="Gene3D" id="3.90.730.10">
    <property type="entry name" value="Ribonuclease T2-like"/>
    <property type="match status" value="1"/>
</dbReference>
<dbReference type="InterPro" id="IPR033697">
    <property type="entry name" value="Ribonuclease_T2_eukaryotic"/>
</dbReference>
<dbReference type="InterPro" id="IPR001568">
    <property type="entry name" value="RNase_T2-like"/>
</dbReference>
<dbReference type="InterPro" id="IPR036430">
    <property type="entry name" value="RNase_T2-like_sf"/>
</dbReference>
<dbReference type="InterPro" id="IPR018188">
    <property type="entry name" value="RNase_T2_His_AS_1"/>
</dbReference>
<dbReference type="InterPro" id="IPR033130">
    <property type="entry name" value="RNase_T2_His_AS_2"/>
</dbReference>
<dbReference type="PANTHER" id="PTHR11240">
    <property type="entry name" value="RIBONUCLEASE T2"/>
    <property type="match status" value="1"/>
</dbReference>
<dbReference type="PANTHER" id="PTHR11240:SF22">
    <property type="entry name" value="RIBONUCLEASE T2"/>
    <property type="match status" value="1"/>
</dbReference>
<dbReference type="Pfam" id="PF00445">
    <property type="entry name" value="Ribonuclease_T2"/>
    <property type="match status" value="1"/>
</dbReference>
<dbReference type="Pfam" id="PF25488">
    <property type="entry name" value="RNaseT2L_C"/>
    <property type="match status" value="1"/>
</dbReference>
<dbReference type="SUPFAM" id="SSF55895">
    <property type="entry name" value="Ribonuclease Rh-like"/>
    <property type="match status" value="1"/>
</dbReference>
<dbReference type="PROSITE" id="PS00530">
    <property type="entry name" value="RNASE_T2_1"/>
    <property type="match status" value="1"/>
</dbReference>
<dbReference type="PROSITE" id="PS00531">
    <property type="entry name" value="RNASE_T2_2"/>
    <property type="match status" value="1"/>
</dbReference>
<comment type="function">
    <text evidence="5 7">Rnase which modulates cell survival under stress conditions. Released from the vacuole to the cytoplasm during stress to promote tRNA and rRNA cleavage and to activate separately a downstream pathway that promotes cell death. Involved in cell size, vacuolar morphology and growth at high temperatures and high salt concentration.</text>
</comment>
<comment type="catalytic activity">
    <reaction evidence="3 4">
        <text>a ribonucleotidyl-ribonucleotide-RNA + H2O = a 3'-end 3'-phospho-ribonucleotide-RNA + a 5'-end dephospho-ribonucleoside-RNA + H(+)</text>
        <dbReference type="Rhea" id="RHEA:68052"/>
        <dbReference type="Rhea" id="RHEA-COMP:10463"/>
        <dbReference type="Rhea" id="RHEA-COMP:13936"/>
        <dbReference type="Rhea" id="RHEA-COMP:17355"/>
        <dbReference type="ChEBI" id="CHEBI:15377"/>
        <dbReference type="ChEBI" id="CHEBI:15378"/>
        <dbReference type="ChEBI" id="CHEBI:83062"/>
        <dbReference type="ChEBI" id="CHEBI:138284"/>
        <dbReference type="ChEBI" id="CHEBI:173118"/>
        <dbReference type="EC" id="4.6.1.19"/>
    </reaction>
</comment>
<comment type="subcellular location">
    <subcellularLocation>
        <location>Vacuole lumen</location>
    </subcellularLocation>
    <subcellularLocation>
        <location>Cytoplasm</location>
    </subcellularLocation>
    <text>Is released from the vacuole to the cytoplasm during stress conditions like oxidative stress or stationary phase stress.</text>
</comment>
<comment type="induction">
    <text>Up-regulated by heat shock and osmotic stress.</text>
</comment>
<comment type="PTM">
    <text evidence="5">N-glycosylated.</text>
</comment>
<comment type="miscellaneous">
    <text evidence="6">Present with 504 molecules/cell in log phase SD medium.</text>
</comment>
<comment type="similarity">
    <text evidence="8">Belongs to the RNase T2 family.</text>
</comment>
<name>RNY1_YEAST</name>
<reference key="1">
    <citation type="journal article" date="1997" name="Nature">
        <title>The nucleotide sequence of Saccharomyces cerevisiae chromosome XVI.</title>
        <authorList>
            <person name="Bussey H."/>
            <person name="Storms R.K."/>
            <person name="Ahmed A."/>
            <person name="Albermann K."/>
            <person name="Allen E."/>
            <person name="Ansorge W."/>
            <person name="Araujo R."/>
            <person name="Aparicio A."/>
            <person name="Barrell B.G."/>
            <person name="Badcock K."/>
            <person name="Benes V."/>
            <person name="Botstein D."/>
            <person name="Bowman S."/>
            <person name="Brueckner M."/>
            <person name="Carpenter J."/>
            <person name="Cherry J.M."/>
            <person name="Chung E."/>
            <person name="Churcher C.M."/>
            <person name="Coster F."/>
            <person name="Davis K."/>
            <person name="Davis R.W."/>
            <person name="Dietrich F.S."/>
            <person name="Delius H."/>
            <person name="DiPaolo T."/>
            <person name="Dubois E."/>
            <person name="Duesterhoeft A."/>
            <person name="Duncan M."/>
            <person name="Floeth M."/>
            <person name="Fortin N."/>
            <person name="Friesen J.D."/>
            <person name="Fritz C."/>
            <person name="Goffeau A."/>
            <person name="Hall J."/>
            <person name="Hebling U."/>
            <person name="Heumann K."/>
            <person name="Hilbert H."/>
            <person name="Hillier L.W."/>
            <person name="Hunicke-Smith S."/>
            <person name="Hyman R.W."/>
            <person name="Johnston M."/>
            <person name="Kalman S."/>
            <person name="Kleine K."/>
            <person name="Komp C."/>
            <person name="Kurdi O."/>
            <person name="Lashkari D."/>
            <person name="Lew H."/>
            <person name="Lin A."/>
            <person name="Lin D."/>
            <person name="Louis E.J."/>
            <person name="Marathe R."/>
            <person name="Messenguy F."/>
            <person name="Mewes H.-W."/>
            <person name="Mirtipati S."/>
            <person name="Moestl D."/>
            <person name="Mueller-Auer S."/>
            <person name="Namath A."/>
            <person name="Nentwich U."/>
            <person name="Oefner P."/>
            <person name="Pearson D."/>
            <person name="Petel F.X."/>
            <person name="Pohl T.M."/>
            <person name="Purnelle B."/>
            <person name="Rajandream M.A."/>
            <person name="Rechmann S."/>
            <person name="Rieger M."/>
            <person name="Riles L."/>
            <person name="Roberts D."/>
            <person name="Schaefer M."/>
            <person name="Scharfe M."/>
            <person name="Scherens B."/>
            <person name="Schramm S."/>
            <person name="Schroeder M."/>
            <person name="Sdicu A.-M."/>
            <person name="Tettelin H."/>
            <person name="Urrestarazu L.A."/>
            <person name="Ushinsky S."/>
            <person name="Vierendeels F."/>
            <person name="Vissers S."/>
            <person name="Voss H."/>
            <person name="Walsh S.V."/>
            <person name="Wambutt R."/>
            <person name="Wang Y."/>
            <person name="Wedler E."/>
            <person name="Wedler H."/>
            <person name="Winnett E."/>
            <person name="Zhong W.-W."/>
            <person name="Zollner A."/>
            <person name="Vo D.H."/>
            <person name="Hani J."/>
        </authorList>
    </citation>
    <scope>NUCLEOTIDE SEQUENCE [LARGE SCALE GENOMIC DNA]</scope>
    <source>
        <strain>ATCC 204508 / S288c</strain>
    </source>
</reference>
<reference key="2">
    <citation type="journal article" date="2014" name="G3 (Bethesda)">
        <title>The reference genome sequence of Saccharomyces cerevisiae: Then and now.</title>
        <authorList>
            <person name="Engel S.R."/>
            <person name="Dietrich F.S."/>
            <person name="Fisk D.G."/>
            <person name="Binkley G."/>
            <person name="Balakrishnan R."/>
            <person name="Costanzo M.C."/>
            <person name="Dwight S.S."/>
            <person name="Hitz B.C."/>
            <person name="Karra K."/>
            <person name="Nash R.S."/>
            <person name="Weng S."/>
            <person name="Wong E.D."/>
            <person name="Lloyd P."/>
            <person name="Skrzypek M.S."/>
            <person name="Miyasato S.R."/>
            <person name="Simison M."/>
            <person name="Cherry J.M."/>
        </authorList>
    </citation>
    <scope>GENOME REANNOTATION</scope>
    <source>
        <strain>ATCC 204508 / S288c</strain>
    </source>
</reference>
<reference key="3">
    <citation type="journal article" date="2007" name="Genome Res.">
        <title>Approaching a complete repository of sequence-verified protein-encoding clones for Saccharomyces cerevisiae.</title>
        <authorList>
            <person name="Hu Y."/>
            <person name="Rolfs A."/>
            <person name="Bhullar B."/>
            <person name="Murthy T.V.S."/>
            <person name="Zhu C."/>
            <person name="Berger M.F."/>
            <person name="Camargo A.A."/>
            <person name="Kelley F."/>
            <person name="McCarron S."/>
            <person name="Jepson D."/>
            <person name="Richardson A."/>
            <person name="Raphael J."/>
            <person name="Moreira D."/>
            <person name="Taycher E."/>
            <person name="Zuo D."/>
            <person name="Mohr S."/>
            <person name="Kane M.F."/>
            <person name="Williamson J."/>
            <person name="Simpson A.J.G."/>
            <person name="Bulyk M.L."/>
            <person name="Harlow E."/>
            <person name="Marsischky G."/>
            <person name="Kolodner R.D."/>
            <person name="LaBaer J."/>
        </authorList>
    </citation>
    <scope>NUCLEOTIDE SEQUENCE [GENOMIC DNA]</scope>
    <source>
        <strain>ATCC 204508 / S288c</strain>
    </source>
</reference>
<reference key="4">
    <citation type="journal article" date="2001" name="Proc. Natl. Acad. Sci. U.S.A.">
        <title>Characterization of Rny1, the Saccharomyces cerevisiae member of the T2 RNase family of RNases: unexpected functions for ancient enzymes?</title>
        <authorList>
            <person name="MacIntosh G.C."/>
            <person name="Bariola P.A."/>
            <person name="Newbigin E."/>
            <person name="Green P.J."/>
        </authorList>
    </citation>
    <scope>FUNCTION</scope>
    <scope>GLYCOSYLATION</scope>
    <scope>SUBCELLULAR LOCATION</scope>
</reference>
<reference key="5">
    <citation type="journal article" date="2003" name="Nature">
        <title>Global analysis of protein expression in yeast.</title>
        <authorList>
            <person name="Ghaemmaghami S."/>
            <person name="Huh W.-K."/>
            <person name="Bower K."/>
            <person name="Howson R.W."/>
            <person name="Belle A."/>
            <person name="Dephoure N."/>
            <person name="O'Shea E.K."/>
            <person name="Weissman J.S."/>
        </authorList>
    </citation>
    <scope>LEVEL OF PROTEIN EXPRESSION [LARGE SCALE ANALYSIS]</scope>
</reference>
<reference key="6">
    <citation type="journal article" date="2009" name="J. Cell Biol.">
        <title>The RNase Rny1p cleaves tRNAs and promotes cell death during oxidative stress in Saccharomyces cerevisiae.</title>
        <authorList>
            <person name="Thompson D.M."/>
            <person name="Parker R."/>
        </authorList>
    </citation>
    <scope>FUNCTION</scope>
    <scope>MUTAGENESIS OF HIS-87 AND HIS-160</scope>
    <scope>SUBCELLULAR LOCATION</scope>
</reference>
<gene>
    <name type="primary">RNY1</name>
    <name type="ordered locus">YPL123C</name>
</gene>
<keyword id="KW-0963">Cytoplasm</keyword>
<keyword id="KW-1015">Disulfide bond</keyword>
<keyword id="KW-0255">Endonuclease</keyword>
<keyword id="KW-0325">Glycoprotein</keyword>
<keyword id="KW-0378">Hydrolase</keyword>
<keyword id="KW-0456">Lyase</keyword>
<keyword id="KW-0540">Nuclease</keyword>
<keyword id="KW-1185">Reference proteome</keyword>
<keyword id="KW-0732">Signal</keyword>
<keyword id="KW-0926">Vacuole</keyword>
<protein>
    <recommendedName>
        <fullName>Ribonuclease T2-like</fullName>
        <shortName>RNase T2-like</shortName>
        <ecNumber>4.6.1.19</ecNumber>
    </recommendedName>
</protein>
<evidence type="ECO:0000250" key="1"/>
<evidence type="ECO:0000255" key="2"/>
<evidence type="ECO:0000255" key="3">
    <source>
        <dbReference type="PROSITE-ProRule" id="PRU10045"/>
    </source>
</evidence>
<evidence type="ECO:0000255" key="4">
    <source>
        <dbReference type="PROSITE-ProRule" id="PRU10046"/>
    </source>
</evidence>
<evidence type="ECO:0000269" key="5">
    <source>
    </source>
</evidence>
<evidence type="ECO:0000269" key="6">
    <source>
    </source>
</evidence>
<evidence type="ECO:0000269" key="7">
    <source>
    </source>
</evidence>
<evidence type="ECO:0000305" key="8"/>
<organism>
    <name type="scientific">Saccharomyces cerevisiae (strain ATCC 204508 / S288c)</name>
    <name type="common">Baker's yeast</name>
    <dbReference type="NCBI Taxonomy" id="559292"/>
    <lineage>
        <taxon>Eukaryota</taxon>
        <taxon>Fungi</taxon>
        <taxon>Dikarya</taxon>
        <taxon>Ascomycota</taxon>
        <taxon>Saccharomycotina</taxon>
        <taxon>Saccharomycetes</taxon>
        <taxon>Saccharomycetales</taxon>
        <taxon>Saccharomycetaceae</taxon>
        <taxon>Saccharomyces</taxon>
    </lineage>
</organism>